<proteinExistence type="predicted"/>
<organism>
    <name type="scientific">Mycobacterium tuberculosis (strain CDC 1551 / Oshkosh)</name>
    <dbReference type="NCBI Taxonomy" id="83331"/>
    <lineage>
        <taxon>Bacteria</taxon>
        <taxon>Bacillati</taxon>
        <taxon>Actinomycetota</taxon>
        <taxon>Actinomycetes</taxon>
        <taxon>Mycobacteriales</taxon>
        <taxon>Mycobacteriaceae</taxon>
        <taxon>Mycobacterium</taxon>
        <taxon>Mycobacterium tuberculosis complex</taxon>
    </lineage>
</organism>
<dbReference type="EMBL" id="AE000516">
    <property type="protein sequence ID" value="AAK47306.1"/>
    <property type="molecule type" value="Genomic_DNA"/>
</dbReference>
<dbReference type="PIR" id="C70928">
    <property type="entry name" value="C70928"/>
</dbReference>
<dbReference type="RefSeq" id="WP_003414739.1">
    <property type="nucleotide sequence ID" value="NZ_KK341227.1"/>
</dbReference>
<dbReference type="SMR" id="P9WMC6"/>
<dbReference type="KEGG" id="mtc:MT2980"/>
<dbReference type="PATRIC" id="fig|83331.31.peg.3220"/>
<dbReference type="HOGENOM" id="CLU_069356_18_1_11"/>
<dbReference type="Proteomes" id="UP000001020">
    <property type="component" value="Chromosome"/>
</dbReference>
<dbReference type="GO" id="GO:0003700">
    <property type="term" value="F:DNA-binding transcription factor activity"/>
    <property type="evidence" value="ECO:0007669"/>
    <property type="project" value="TreeGrafter"/>
</dbReference>
<dbReference type="GO" id="GO:0000976">
    <property type="term" value="F:transcription cis-regulatory region binding"/>
    <property type="evidence" value="ECO:0007669"/>
    <property type="project" value="TreeGrafter"/>
</dbReference>
<dbReference type="Gene3D" id="1.10.357.10">
    <property type="entry name" value="Tetracycline Repressor, domain 2"/>
    <property type="match status" value="1"/>
</dbReference>
<dbReference type="InterPro" id="IPR023772">
    <property type="entry name" value="DNA-bd_HTH_TetR-type_CS"/>
</dbReference>
<dbReference type="InterPro" id="IPR009057">
    <property type="entry name" value="Homeodomain-like_sf"/>
</dbReference>
<dbReference type="InterPro" id="IPR050109">
    <property type="entry name" value="HTH-type_TetR-like_transc_reg"/>
</dbReference>
<dbReference type="InterPro" id="IPR001647">
    <property type="entry name" value="HTH_TetR"/>
</dbReference>
<dbReference type="PANTHER" id="PTHR30055:SF234">
    <property type="entry name" value="HTH-TYPE TRANSCRIPTIONAL REGULATOR BETI"/>
    <property type="match status" value="1"/>
</dbReference>
<dbReference type="PANTHER" id="PTHR30055">
    <property type="entry name" value="HTH-TYPE TRANSCRIPTIONAL REGULATOR RUTR"/>
    <property type="match status" value="1"/>
</dbReference>
<dbReference type="Pfam" id="PF00440">
    <property type="entry name" value="TetR_N"/>
    <property type="match status" value="1"/>
</dbReference>
<dbReference type="PRINTS" id="PR00455">
    <property type="entry name" value="HTHTETR"/>
</dbReference>
<dbReference type="SUPFAM" id="SSF46689">
    <property type="entry name" value="Homeodomain-like"/>
    <property type="match status" value="1"/>
</dbReference>
<dbReference type="PROSITE" id="PS01081">
    <property type="entry name" value="HTH_TETR_1"/>
    <property type="match status" value="1"/>
</dbReference>
<dbReference type="PROSITE" id="PS50977">
    <property type="entry name" value="HTH_TETR_2"/>
    <property type="match status" value="1"/>
</dbReference>
<evidence type="ECO:0000255" key="1">
    <source>
        <dbReference type="PROSITE-ProRule" id="PRU00335"/>
    </source>
</evidence>
<reference key="1">
    <citation type="journal article" date="2002" name="J. Bacteriol.">
        <title>Whole-genome comparison of Mycobacterium tuberculosis clinical and laboratory strains.</title>
        <authorList>
            <person name="Fleischmann R.D."/>
            <person name="Alland D."/>
            <person name="Eisen J.A."/>
            <person name="Carpenter L."/>
            <person name="White O."/>
            <person name="Peterson J.D."/>
            <person name="DeBoy R.T."/>
            <person name="Dodson R.J."/>
            <person name="Gwinn M.L."/>
            <person name="Haft D.H."/>
            <person name="Hickey E.K."/>
            <person name="Kolonay J.F."/>
            <person name="Nelson W.C."/>
            <person name="Umayam L.A."/>
            <person name="Ermolaeva M.D."/>
            <person name="Salzberg S.L."/>
            <person name="Delcher A."/>
            <person name="Utterback T.R."/>
            <person name="Weidman J.F."/>
            <person name="Khouri H.M."/>
            <person name="Gill J."/>
            <person name="Mikula A."/>
            <person name="Bishai W."/>
            <person name="Jacobs W.R. Jr."/>
            <person name="Venter J.C."/>
            <person name="Fraser C.M."/>
        </authorList>
    </citation>
    <scope>NUCLEOTIDE SEQUENCE [LARGE SCALE GENOMIC DNA]</scope>
    <source>
        <strain>CDC 1551 / Oshkosh</strain>
    </source>
</reference>
<accession>P9WMC6</accession>
<accession>L0TCL6</accession>
<accession>P67440</accession>
<accession>Q10829</accession>
<feature type="chain" id="PRO_0000427327" description="Uncharacterized HTH-type transcriptional regulator MT2980">
    <location>
        <begin position="1"/>
        <end position="195"/>
    </location>
</feature>
<feature type="domain" description="HTH tetR-type" evidence="1">
    <location>
        <begin position="10"/>
        <end position="70"/>
    </location>
</feature>
<feature type="DNA-binding region" description="H-T-H motif" evidence="1">
    <location>
        <begin position="33"/>
        <end position="52"/>
    </location>
</feature>
<keyword id="KW-0238">DNA-binding</keyword>
<keyword id="KW-1185">Reference proteome</keyword>
<keyword id="KW-0804">Transcription</keyword>
<keyword id="KW-0805">Transcription regulation</keyword>
<sequence length="195" mass="21239">MARTQQQRREETVARLLQASIDTIIEVGYARASAAVITKRAGVSVGALFRHFETMGDFMAATAYEVLRRQLETFTKQVAEIPADRPALPAALTILRDITAGSTNAVLYELMVAARTDEKLKETLQNVLGQYSAKIHDAARALPGAESFPEETFPVIVALMTNVFDGAAIVRGVLPQPELEEQRIPMLTALLTAGL</sequence>
<gene>
    <name type="ordered locus">MT2980</name>
</gene>
<protein>
    <recommendedName>
        <fullName>Uncharacterized HTH-type transcriptional regulator MT2980</fullName>
    </recommendedName>
</protein>
<name>Y2912_MYCTO</name>